<comment type="function">
    <text evidence="1">This protein is located at the 30S-50S ribosomal subunit interface and may play a role in the structure and function of the aminoacyl-tRNA binding site.</text>
</comment>
<comment type="similarity">
    <text evidence="1">Belongs to the bacterial ribosomal protein bL19 family.</text>
</comment>
<dbReference type="EMBL" id="CP000031">
    <property type="protein sequence ID" value="AAV96492.1"/>
    <property type="molecule type" value="Genomic_DNA"/>
</dbReference>
<dbReference type="RefSeq" id="WP_011048947.1">
    <property type="nucleotide sequence ID" value="NC_003911.12"/>
</dbReference>
<dbReference type="SMR" id="Q5LNE8"/>
<dbReference type="STRING" id="246200.SPO3257"/>
<dbReference type="PaxDb" id="246200-SPO3257"/>
<dbReference type="KEGG" id="sil:SPO3257"/>
<dbReference type="eggNOG" id="COG0335">
    <property type="taxonomic scope" value="Bacteria"/>
</dbReference>
<dbReference type="HOGENOM" id="CLU_103507_0_2_5"/>
<dbReference type="OrthoDB" id="9803541at2"/>
<dbReference type="Proteomes" id="UP000001023">
    <property type="component" value="Chromosome"/>
</dbReference>
<dbReference type="GO" id="GO:0022625">
    <property type="term" value="C:cytosolic large ribosomal subunit"/>
    <property type="evidence" value="ECO:0007669"/>
    <property type="project" value="TreeGrafter"/>
</dbReference>
<dbReference type="GO" id="GO:0003735">
    <property type="term" value="F:structural constituent of ribosome"/>
    <property type="evidence" value="ECO:0007669"/>
    <property type="project" value="InterPro"/>
</dbReference>
<dbReference type="GO" id="GO:0006412">
    <property type="term" value="P:translation"/>
    <property type="evidence" value="ECO:0007669"/>
    <property type="project" value="UniProtKB-UniRule"/>
</dbReference>
<dbReference type="FunFam" id="2.30.30.790:FF:000001">
    <property type="entry name" value="50S ribosomal protein L19"/>
    <property type="match status" value="1"/>
</dbReference>
<dbReference type="Gene3D" id="2.30.30.790">
    <property type="match status" value="1"/>
</dbReference>
<dbReference type="HAMAP" id="MF_00402">
    <property type="entry name" value="Ribosomal_bL19"/>
    <property type="match status" value="1"/>
</dbReference>
<dbReference type="InterPro" id="IPR001857">
    <property type="entry name" value="Ribosomal_bL19"/>
</dbReference>
<dbReference type="InterPro" id="IPR018257">
    <property type="entry name" value="Ribosomal_bL19_CS"/>
</dbReference>
<dbReference type="InterPro" id="IPR038657">
    <property type="entry name" value="Ribosomal_bL19_sf"/>
</dbReference>
<dbReference type="InterPro" id="IPR008991">
    <property type="entry name" value="Translation_prot_SH3-like_sf"/>
</dbReference>
<dbReference type="NCBIfam" id="TIGR01024">
    <property type="entry name" value="rplS_bact"/>
    <property type="match status" value="1"/>
</dbReference>
<dbReference type="PANTHER" id="PTHR15680:SF9">
    <property type="entry name" value="LARGE RIBOSOMAL SUBUNIT PROTEIN BL19M"/>
    <property type="match status" value="1"/>
</dbReference>
<dbReference type="PANTHER" id="PTHR15680">
    <property type="entry name" value="RIBOSOMAL PROTEIN L19"/>
    <property type="match status" value="1"/>
</dbReference>
<dbReference type="Pfam" id="PF01245">
    <property type="entry name" value="Ribosomal_L19"/>
    <property type="match status" value="1"/>
</dbReference>
<dbReference type="PIRSF" id="PIRSF002191">
    <property type="entry name" value="Ribosomal_L19"/>
    <property type="match status" value="1"/>
</dbReference>
<dbReference type="PRINTS" id="PR00061">
    <property type="entry name" value="RIBOSOMALL19"/>
</dbReference>
<dbReference type="SUPFAM" id="SSF50104">
    <property type="entry name" value="Translation proteins SH3-like domain"/>
    <property type="match status" value="1"/>
</dbReference>
<dbReference type="PROSITE" id="PS01015">
    <property type="entry name" value="RIBOSOMAL_L19"/>
    <property type="match status" value="1"/>
</dbReference>
<name>RL19_RUEPO</name>
<reference key="1">
    <citation type="journal article" date="2004" name="Nature">
        <title>Genome sequence of Silicibacter pomeroyi reveals adaptations to the marine environment.</title>
        <authorList>
            <person name="Moran M.A."/>
            <person name="Buchan A."/>
            <person name="Gonzalez J.M."/>
            <person name="Heidelberg J.F."/>
            <person name="Whitman W.B."/>
            <person name="Kiene R.P."/>
            <person name="Henriksen J.R."/>
            <person name="King G.M."/>
            <person name="Belas R."/>
            <person name="Fuqua C."/>
            <person name="Brinkac L.M."/>
            <person name="Lewis M."/>
            <person name="Johri S."/>
            <person name="Weaver B."/>
            <person name="Pai G."/>
            <person name="Eisen J.A."/>
            <person name="Rahe E."/>
            <person name="Sheldon W.M."/>
            <person name="Ye W."/>
            <person name="Miller T.R."/>
            <person name="Carlton J."/>
            <person name="Rasko D.A."/>
            <person name="Paulsen I.T."/>
            <person name="Ren Q."/>
            <person name="Daugherty S.C."/>
            <person name="DeBoy R.T."/>
            <person name="Dodson R.J."/>
            <person name="Durkin A.S."/>
            <person name="Madupu R."/>
            <person name="Nelson W.C."/>
            <person name="Sullivan S.A."/>
            <person name="Rosovitz M.J."/>
            <person name="Haft D.H."/>
            <person name="Selengut J."/>
            <person name="Ward N."/>
        </authorList>
    </citation>
    <scope>NUCLEOTIDE SEQUENCE [LARGE SCALE GENOMIC DNA]</scope>
    <source>
        <strain>ATCC 700808 / DSM 15171 / DSS-3</strain>
    </source>
</reference>
<reference key="2">
    <citation type="journal article" date="2014" name="Stand. Genomic Sci.">
        <title>An updated genome annotation for the model marine bacterium Ruegeria pomeroyi DSS-3.</title>
        <authorList>
            <person name="Rivers A.R."/>
            <person name="Smith C.B."/>
            <person name="Moran M.A."/>
        </authorList>
    </citation>
    <scope>GENOME REANNOTATION</scope>
    <source>
        <strain>ATCC 700808 / DSM 15171 / DSS-3</strain>
    </source>
</reference>
<evidence type="ECO:0000255" key="1">
    <source>
        <dbReference type="HAMAP-Rule" id="MF_00402"/>
    </source>
</evidence>
<evidence type="ECO:0000305" key="2"/>
<organism>
    <name type="scientific">Ruegeria pomeroyi (strain ATCC 700808 / DSM 15171 / DSS-3)</name>
    <name type="common">Silicibacter pomeroyi</name>
    <dbReference type="NCBI Taxonomy" id="246200"/>
    <lineage>
        <taxon>Bacteria</taxon>
        <taxon>Pseudomonadati</taxon>
        <taxon>Pseudomonadota</taxon>
        <taxon>Alphaproteobacteria</taxon>
        <taxon>Rhodobacterales</taxon>
        <taxon>Roseobacteraceae</taxon>
        <taxon>Ruegeria</taxon>
    </lineage>
</organism>
<sequence>MDLIAQLEAEQIAALGKDIPDFKAGDTIRVGYKVTEGTRSRVQNYEGVCISRKNGSGIAGSFTVRKISFGEGVERVFPLYSTNIDSITVVRRGRVRRAKLYYLRARRGKSARIAEVANYKPKADAEA</sequence>
<feature type="chain" id="PRO_0000163527" description="Large ribosomal subunit protein bL19">
    <location>
        <begin position="1"/>
        <end position="127"/>
    </location>
</feature>
<gene>
    <name evidence="1" type="primary">rplS</name>
    <name type="ordered locus">SPO3257</name>
</gene>
<proteinExistence type="inferred from homology"/>
<accession>Q5LNE8</accession>
<protein>
    <recommendedName>
        <fullName evidence="1">Large ribosomal subunit protein bL19</fullName>
    </recommendedName>
    <alternativeName>
        <fullName evidence="2">50S ribosomal protein L19</fullName>
    </alternativeName>
</protein>
<keyword id="KW-1185">Reference proteome</keyword>
<keyword id="KW-0687">Ribonucleoprotein</keyword>
<keyword id="KW-0689">Ribosomal protein</keyword>